<comment type="catalytic activity">
    <reaction evidence="1">
        <text>L-glutamine + H2O = L-glutamate + NH4(+)</text>
        <dbReference type="Rhea" id="RHEA:15889"/>
        <dbReference type="ChEBI" id="CHEBI:15377"/>
        <dbReference type="ChEBI" id="CHEBI:28938"/>
        <dbReference type="ChEBI" id="CHEBI:29985"/>
        <dbReference type="ChEBI" id="CHEBI:58359"/>
        <dbReference type="EC" id="3.5.1.2"/>
    </reaction>
</comment>
<comment type="subunit">
    <text evidence="1">Homotetramer.</text>
</comment>
<comment type="similarity">
    <text evidence="1">Belongs to the glutaminase family.</text>
</comment>
<accession>Q15U72</accession>
<organism>
    <name type="scientific">Pseudoalteromonas atlantica (strain T6c / ATCC BAA-1087)</name>
    <dbReference type="NCBI Taxonomy" id="3042615"/>
    <lineage>
        <taxon>Bacteria</taxon>
        <taxon>Pseudomonadati</taxon>
        <taxon>Pseudomonadota</taxon>
        <taxon>Gammaproteobacteria</taxon>
        <taxon>Alteromonadales</taxon>
        <taxon>Alteromonadaceae</taxon>
        <taxon>Paraglaciecola</taxon>
    </lineage>
</organism>
<evidence type="ECO:0000255" key="1">
    <source>
        <dbReference type="HAMAP-Rule" id="MF_00313"/>
    </source>
</evidence>
<proteinExistence type="inferred from homology"/>
<gene>
    <name evidence="1" type="primary">glsA</name>
    <name type="ordered locus">Patl_2048</name>
</gene>
<dbReference type="EC" id="3.5.1.2" evidence="1"/>
<dbReference type="EMBL" id="CP000388">
    <property type="protein sequence ID" value="ABG40566.1"/>
    <property type="molecule type" value="Genomic_DNA"/>
</dbReference>
<dbReference type="RefSeq" id="WP_011574857.1">
    <property type="nucleotide sequence ID" value="NC_008228.1"/>
</dbReference>
<dbReference type="SMR" id="Q15U72"/>
<dbReference type="STRING" id="342610.Patl_2048"/>
<dbReference type="KEGG" id="pat:Patl_2048"/>
<dbReference type="eggNOG" id="COG2066">
    <property type="taxonomic scope" value="Bacteria"/>
</dbReference>
<dbReference type="HOGENOM" id="CLU_027932_1_1_6"/>
<dbReference type="OrthoDB" id="9788822at2"/>
<dbReference type="Proteomes" id="UP000001981">
    <property type="component" value="Chromosome"/>
</dbReference>
<dbReference type="GO" id="GO:0004359">
    <property type="term" value="F:glutaminase activity"/>
    <property type="evidence" value="ECO:0007669"/>
    <property type="project" value="UniProtKB-UniRule"/>
</dbReference>
<dbReference type="GO" id="GO:0006537">
    <property type="term" value="P:glutamate biosynthetic process"/>
    <property type="evidence" value="ECO:0007669"/>
    <property type="project" value="TreeGrafter"/>
</dbReference>
<dbReference type="GO" id="GO:0006543">
    <property type="term" value="P:glutamine catabolic process"/>
    <property type="evidence" value="ECO:0007669"/>
    <property type="project" value="TreeGrafter"/>
</dbReference>
<dbReference type="FunFam" id="3.40.710.10:FF:000005">
    <property type="entry name" value="Glutaminase"/>
    <property type="match status" value="1"/>
</dbReference>
<dbReference type="Gene3D" id="3.40.710.10">
    <property type="entry name" value="DD-peptidase/beta-lactamase superfamily"/>
    <property type="match status" value="1"/>
</dbReference>
<dbReference type="HAMAP" id="MF_00313">
    <property type="entry name" value="Glutaminase"/>
    <property type="match status" value="1"/>
</dbReference>
<dbReference type="InterPro" id="IPR012338">
    <property type="entry name" value="Beta-lactam/transpept-like"/>
</dbReference>
<dbReference type="InterPro" id="IPR015868">
    <property type="entry name" value="Glutaminase"/>
</dbReference>
<dbReference type="NCBIfam" id="TIGR03814">
    <property type="entry name" value="Gln_ase"/>
    <property type="match status" value="1"/>
</dbReference>
<dbReference type="NCBIfam" id="NF002133">
    <property type="entry name" value="PRK00971.1-2"/>
    <property type="match status" value="1"/>
</dbReference>
<dbReference type="PANTHER" id="PTHR12544">
    <property type="entry name" value="GLUTAMINASE"/>
    <property type="match status" value="1"/>
</dbReference>
<dbReference type="PANTHER" id="PTHR12544:SF29">
    <property type="entry name" value="GLUTAMINASE"/>
    <property type="match status" value="1"/>
</dbReference>
<dbReference type="Pfam" id="PF04960">
    <property type="entry name" value="Glutaminase"/>
    <property type="match status" value="1"/>
</dbReference>
<dbReference type="SUPFAM" id="SSF56601">
    <property type="entry name" value="beta-lactamase/transpeptidase-like"/>
    <property type="match status" value="1"/>
</dbReference>
<keyword id="KW-0378">Hydrolase</keyword>
<sequence>MQNIVDSIYQEMRSRTDRGKVANYIPQLACVDPNQFALTVVTQEGEVFSAGCAQTLFSIQSISKVFTLTMALGKLGDALWAQVGREPSGDPFNSIVQLEHEGGIPRNPFINAGAIAVADAIMGHNEPKETLAEILHFVRFVANDDSISIDEKVAQSEMMTGSRNASLAHFMASFERLENPVDKVLGTYFHHCSISMTTEQLARAGMFLVSNGTNHCTGMRVVPEHRARRINSLMLMCGHYDGSGEFAYRVGLPGKSGVGGGILAIAPGKASIAVWSPGLDKIGNSKLGTEALEMLVQETGWSIFGH</sequence>
<protein>
    <recommendedName>
        <fullName evidence="1">Glutaminase</fullName>
        <ecNumber evidence="1">3.5.1.2</ecNumber>
    </recommendedName>
</protein>
<reference key="1">
    <citation type="submission" date="2006-06" db="EMBL/GenBank/DDBJ databases">
        <title>Complete sequence of Pseudoalteromonas atlantica T6c.</title>
        <authorList>
            <consortium name="US DOE Joint Genome Institute"/>
            <person name="Copeland A."/>
            <person name="Lucas S."/>
            <person name="Lapidus A."/>
            <person name="Barry K."/>
            <person name="Detter J.C."/>
            <person name="Glavina del Rio T."/>
            <person name="Hammon N."/>
            <person name="Israni S."/>
            <person name="Dalin E."/>
            <person name="Tice H."/>
            <person name="Pitluck S."/>
            <person name="Saunders E."/>
            <person name="Brettin T."/>
            <person name="Bruce D."/>
            <person name="Han C."/>
            <person name="Tapia R."/>
            <person name="Gilna P."/>
            <person name="Schmutz J."/>
            <person name="Larimer F."/>
            <person name="Land M."/>
            <person name="Hauser L."/>
            <person name="Kyrpides N."/>
            <person name="Kim E."/>
            <person name="Karls A.C."/>
            <person name="Bartlett D."/>
            <person name="Higgins B.P."/>
            <person name="Richardson P."/>
        </authorList>
    </citation>
    <scope>NUCLEOTIDE SEQUENCE [LARGE SCALE GENOMIC DNA]</scope>
    <source>
        <strain>T6c / ATCC BAA-1087</strain>
    </source>
</reference>
<feature type="chain" id="PRO_0000336033" description="Glutaminase">
    <location>
        <begin position="1"/>
        <end position="306"/>
    </location>
</feature>
<feature type="binding site" evidence="1">
    <location>
        <position position="61"/>
    </location>
    <ligand>
        <name>substrate</name>
    </ligand>
</feature>
<feature type="binding site" evidence="1">
    <location>
        <position position="111"/>
    </location>
    <ligand>
        <name>substrate</name>
    </ligand>
</feature>
<feature type="binding site" evidence="1">
    <location>
        <position position="157"/>
    </location>
    <ligand>
        <name>substrate</name>
    </ligand>
</feature>
<feature type="binding site" evidence="1">
    <location>
        <position position="164"/>
    </location>
    <ligand>
        <name>substrate</name>
    </ligand>
</feature>
<feature type="binding site" evidence="1">
    <location>
        <position position="188"/>
    </location>
    <ligand>
        <name>substrate</name>
    </ligand>
</feature>
<feature type="binding site" evidence="1">
    <location>
        <position position="240"/>
    </location>
    <ligand>
        <name>substrate</name>
    </ligand>
</feature>
<feature type="binding site" evidence="1">
    <location>
        <position position="258"/>
    </location>
    <ligand>
        <name>substrate</name>
    </ligand>
</feature>
<name>GLSA_PSEA6</name>